<gene>
    <name type="primary">GNG12</name>
</gene>
<sequence length="72" mass="8006">MSSKTASTNNIAQARRTVQQLRLEASIERIKVSKASADLMSYCEEHARSDPLLIGIPTSENPFKDKKTCIIL</sequence>
<accession>Q9UBI6</accession>
<accession>Q69YP5</accession>
<accession>Q9BRV5</accession>
<keyword id="KW-0007">Acetylation</keyword>
<keyword id="KW-1003">Cell membrane</keyword>
<keyword id="KW-0449">Lipoprotein</keyword>
<keyword id="KW-0472">Membrane</keyword>
<keyword id="KW-0488">Methylation</keyword>
<keyword id="KW-0597">Phosphoprotein</keyword>
<keyword id="KW-0636">Prenylation</keyword>
<keyword id="KW-1267">Proteomics identification</keyword>
<keyword id="KW-1185">Reference proteome</keyword>
<keyword id="KW-0807">Transducer</keyword>
<evidence type="ECO:0000250" key="1"/>
<evidence type="ECO:0000250" key="2">
    <source>
        <dbReference type="UniProtKB" id="Q9DAS9"/>
    </source>
</evidence>
<evidence type="ECO:0000269" key="3">
    <source>
    </source>
</evidence>
<evidence type="ECO:0000305" key="4"/>
<evidence type="ECO:0007744" key="5">
    <source>
    </source>
</evidence>
<evidence type="ECO:0007744" key="6">
    <source>
    </source>
</evidence>
<organism>
    <name type="scientific">Homo sapiens</name>
    <name type="common">Human</name>
    <dbReference type="NCBI Taxonomy" id="9606"/>
    <lineage>
        <taxon>Eukaryota</taxon>
        <taxon>Metazoa</taxon>
        <taxon>Chordata</taxon>
        <taxon>Craniata</taxon>
        <taxon>Vertebrata</taxon>
        <taxon>Euteleostomi</taxon>
        <taxon>Mammalia</taxon>
        <taxon>Eutheria</taxon>
        <taxon>Euarchontoglires</taxon>
        <taxon>Primates</taxon>
        <taxon>Haplorrhini</taxon>
        <taxon>Catarrhini</taxon>
        <taxon>Hominidae</taxon>
        <taxon>Homo</taxon>
    </lineage>
</organism>
<reference key="1">
    <citation type="journal article" date="2000" name="DNA Res.">
        <title>Genomic characterization of the human heterotrimeric G protein alpha, beta, and gamma subunit genes.</title>
        <authorList>
            <person name="Hurowitz E.H."/>
            <person name="Melnyk J.M."/>
            <person name="Chen Y.J."/>
            <person name="Kouros-Mehr H."/>
            <person name="Simon M.I."/>
            <person name="Shizuya H."/>
        </authorList>
    </citation>
    <scope>NUCLEOTIDE SEQUENCE [GENOMIC DNA]</scope>
</reference>
<reference key="2">
    <citation type="submission" date="1999-01" db="EMBL/GenBank/DDBJ databases">
        <title>Cloning and characterizing a novel human cDNA homologous to Bos taurus G-protein gamma-12 subunit mRNA.</title>
        <authorList>
            <person name="Yang L."/>
            <person name="Yu L."/>
            <person name="Zhao S.Y."/>
        </authorList>
    </citation>
    <scope>NUCLEOTIDE SEQUENCE [MRNA]</scope>
</reference>
<reference key="3">
    <citation type="journal article" date="2000" name="Proc. Natl. Acad. Sci. U.S.A.">
        <title>Gene expression profiling in the human hypothalamus-pituitary-adrenal axis and full-length cDNA cloning.</title>
        <authorList>
            <person name="Hu R.-M."/>
            <person name="Han Z.-G."/>
            <person name="Song H.-D."/>
            <person name="Peng Y.-D."/>
            <person name="Huang Q.-H."/>
            <person name="Ren S.-X."/>
            <person name="Gu Y.-J."/>
            <person name="Huang C.-H."/>
            <person name="Li Y.-B."/>
            <person name="Jiang C.-L."/>
            <person name="Fu G."/>
            <person name="Zhang Q.-H."/>
            <person name="Gu B.-W."/>
            <person name="Dai M."/>
            <person name="Mao Y.-F."/>
            <person name="Gao G.-F."/>
            <person name="Rong R."/>
            <person name="Ye M."/>
            <person name="Zhou J."/>
            <person name="Xu S.-H."/>
            <person name="Gu J."/>
            <person name="Shi J.-X."/>
            <person name="Jin W.-R."/>
            <person name="Zhang C.-K."/>
            <person name="Wu T.-M."/>
            <person name="Huang G.-Y."/>
            <person name="Chen Z."/>
            <person name="Chen M.-D."/>
            <person name="Chen J.-L."/>
        </authorList>
    </citation>
    <scope>NUCLEOTIDE SEQUENCE [LARGE SCALE MRNA]</scope>
    <source>
        <tissue>Adrenal gland</tissue>
    </source>
</reference>
<reference key="4">
    <citation type="journal article" date="2001" name="Protein Sci.">
        <title>Identification of a region in G protein gamma subunits conserved across species but hypervariable among subunit isoforms.</title>
        <authorList>
            <person name="Cook L.A."/>
            <person name="Schey K.L."/>
            <person name="Cleator J.H."/>
            <person name="Wilcox M.D."/>
            <person name="Dingus J."/>
            <person name="Hildebrandt J.D."/>
        </authorList>
    </citation>
    <scope>NUCLEOTIDE SEQUENCE [MRNA]</scope>
</reference>
<reference key="5">
    <citation type="submission" date="2002-03" db="EMBL/GenBank/DDBJ databases">
        <title>cDNA clones of human proteins involved in signal transduction sequenced by the Guthrie cDNA resource center (www.cdna.org).</title>
        <authorList>
            <person name="Puhl H.L. III"/>
            <person name="Ikeda S.R."/>
            <person name="Aronstam R.S."/>
        </authorList>
    </citation>
    <scope>NUCLEOTIDE SEQUENCE [LARGE SCALE MRNA]</scope>
</reference>
<reference key="6">
    <citation type="journal article" date="2004" name="Nat. Genet.">
        <title>Complete sequencing and characterization of 21,243 full-length human cDNAs.</title>
        <authorList>
            <person name="Ota T."/>
            <person name="Suzuki Y."/>
            <person name="Nishikawa T."/>
            <person name="Otsuki T."/>
            <person name="Sugiyama T."/>
            <person name="Irie R."/>
            <person name="Wakamatsu A."/>
            <person name="Hayashi K."/>
            <person name="Sato H."/>
            <person name="Nagai K."/>
            <person name="Kimura K."/>
            <person name="Makita H."/>
            <person name="Sekine M."/>
            <person name="Obayashi M."/>
            <person name="Nishi T."/>
            <person name="Shibahara T."/>
            <person name="Tanaka T."/>
            <person name="Ishii S."/>
            <person name="Yamamoto J."/>
            <person name="Saito K."/>
            <person name="Kawai Y."/>
            <person name="Isono Y."/>
            <person name="Nakamura Y."/>
            <person name="Nagahari K."/>
            <person name="Murakami K."/>
            <person name="Yasuda T."/>
            <person name="Iwayanagi T."/>
            <person name="Wagatsuma M."/>
            <person name="Shiratori A."/>
            <person name="Sudo H."/>
            <person name="Hosoiri T."/>
            <person name="Kaku Y."/>
            <person name="Kodaira H."/>
            <person name="Kondo H."/>
            <person name="Sugawara M."/>
            <person name="Takahashi M."/>
            <person name="Kanda K."/>
            <person name="Yokoi T."/>
            <person name="Furuya T."/>
            <person name="Kikkawa E."/>
            <person name="Omura Y."/>
            <person name="Abe K."/>
            <person name="Kamihara K."/>
            <person name="Katsuta N."/>
            <person name="Sato K."/>
            <person name="Tanikawa M."/>
            <person name="Yamazaki M."/>
            <person name="Ninomiya K."/>
            <person name="Ishibashi T."/>
            <person name="Yamashita H."/>
            <person name="Murakawa K."/>
            <person name="Fujimori K."/>
            <person name="Tanai H."/>
            <person name="Kimata M."/>
            <person name="Watanabe M."/>
            <person name="Hiraoka S."/>
            <person name="Chiba Y."/>
            <person name="Ishida S."/>
            <person name="Ono Y."/>
            <person name="Takiguchi S."/>
            <person name="Watanabe S."/>
            <person name="Yosida M."/>
            <person name="Hotuta T."/>
            <person name="Kusano J."/>
            <person name="Kanehori K."/>
            <person name="Takahashi-Fujii A."/>
            <person name="Hara H."/>
            <person name="Tanase T.-O."/>
            <person name="Nomura Y."/>
            <person name="Togiya S."/>
            <person name="Komai F."/>
            <person name="Hara R."/>
            <person name="Takeuchi K."/>
            <person name="Arita M."/>
            <person name="Imose N."/>
            <person name="Musashino K."/>
            <person name="Yuuki H."/>
            <person name="Oshima A."/>
            <person name="Sasaki N."/>
            <person name="Aotsuka S."/>
            <person name="Yoshikawa Y."/>
            <person name="Matsunawa H."/>
            <person name="Ichihara T."/>
            <person name="Shiohata N."/>
            <person name="Sano S."/>
            <person name="Moriya S."/>
            <person name="Momiyama H."/>
            <person name="Satoh N."/>
            <person name="Takami S."/>
            <person name="Terashima Y."/>
            <person name="Suzuki O."/>
            <person name="Nakagawa S."/>
            <person name="Senoh A."/>
            <person name="Mizoguchi H."/>
            <person name="Goto Y."/>
            <person name="Shimizu F."/>
            <person name="Wakebe H."/>
            <person name="Hishigaki H."/>
            <person name="Watanabe T."/>
            <person name="Sugiyama A."/>
            <person name="Takemoto M."/>
            <person name="Kawakami B."/>
            <person name="Yamazaki M."/>
            <person name="Watanabe K."/>
            <person name="Kumagai A."/>
            <person name="Itakura S."/>
            <person name="Fukuzumi Y."/>
            <person name="Fujimori Y."/>
            <person name="Komiyama M."/>
            <person name="Tashiro H."/>
            <person name="Tanigami A."/>
            <person name="Fujiwara T."/>
            <person name="Ono T."/>
            <person name="Yamada K."/>
            <person name="Fujii Y."/>
            <person name="Ozaki K."/>
            <person name="Hirao M."/>
            <person name="Ohmori Y."/>
            <person name="Kawabata A."/>
            <person name="Hikiji T."/>
            <person name="Kobatake N."/>
            <person name="Inagaki H."/>
            <person name="Ikema Y."/>
            <person name="Okamoto S."/>
            <person name="Okitani R."/>
            <person name="Kawakami T."/>
            <person name="Noguchi S."/>
            <person name="Itoh T."/>
            <person name="Shigeta K."/>
            <person name="Senba T."/>
            <person name="Matsumura K."/>
            <person name="Nakajima Y."/>
            <person name="Mizuno T."/>
            <person name="Morinaga M."/>
            <person name="Sasaki M."/>
            <person name="Togashi T."/>
            <person name="Oyama M."/>
            <person name="Hata H."/>
            <person name="Watanabe M."/>
            <person name="Komatsu T."/>
            <person name="Mizushima-Sugano J."/>
            <person name="Satoh T."/>
            <person name="Shirai Y."/>
            <person name="Takahashi Y."/>
            <person name="Nakagawa K."/>
            <person name="Okumura K."/>
            <person name="Nagase T."/>
            <person name="Nomura N."/>
            <person name="Kikuchi H."/>
            <person name="Masuho Y."/>
            <person name="Yamashita R."/>
            <person name="Nakai K."/>
            <person name="Yada T."/>
            <person name="Nakamura Y."/>
            <person name="Ohara O."/>
            <person name="Isogai T."/>
            <person name="Sugano S."/>
        </authorList>
    </citation>
    <scope>NUCLEOTIDE SEQUENCE [LARGE SCALE MRNA]</scope>
    <source>
        <tissue>Uterus</tissue>
    </source>
</reference>
<reference key="7">
    <citation type="journal article" date="2007" name="BMC Genomics">
        <title>The full-ORF clone resource of the German cDNA consortium.</title>
        <authorList>
            <person name="Bechtel S."/>
            <person name="Rosenfelder H."/>
            <person name="Duda A."/>
            <person name="Schmidt C.P."/>
            <person name="Ernst U."/>
            <person name="Wellenreuther R."/>
            <person name="Mehrle A."/>
            <person name="Schuster C."/>
            <person name="Bahr A."/>
            <person name="Bloecker H."/>
            <person name="Heubner D."/>
            <person name="Hoerlein A."/>
            <person name="Michel G."/>
            <person name="Wedler H."/>
            <person name="Koehrer K."/>
            <person name="Ottenwaelder B."/>
            <person name="Poustka A."/>
            <person name="Wiemann S."/>
            <person name="Schupp I."/>
        </authorList>
    </citation>
    <scope>NUCLEOTIDE SEQUENCE [LARGE SCALE MRNA]</scope>
    <source>
        <tissue>Melanoma</tissue>
    </source>
</reference>
<reference key="8">
    <citation type="submission" date="2005-09" db="EMBL/GenBank/DDBJ databases">
        <authorList>
            <person name="Mural R.J."/>
            <person name="Istrail S."/>
            <person name="Sutton G."/>
            <person name="Florea L."/>
            <person name="Halpern A.L."/>
            <person name="Mobarry C.M."/>
            <person name="Lippert R."/>
            <person name="Walenz B."/>
            <person name="Shatkay H."/>
            <person name="Dew I."/>
            <person name="Miller J.R."/>
            <person name="Flanigan M.J."/>
            <person name="Edwards N.J."/>
            <person name="Bolanos R."/>
            <person name="Fasulo D."/>
            <person name="Halldorsson B.V."/>
            <person name="Hannenhalli S."/>
            <person name="Turner R."/>
            <person name="Yooseph S."/>
            <person name="Lu F."/>
            <person name="Nusskern D.R."/>
            <person name="Shue B.C."/>
            <person name="Zheng X.H."/>
            <person name="Zhong F."/>
            <person name="Delcher A.L."/>
            <person name="Huson D.H."/>
            <person name="Kravitz S.A."/>
            <person name="Mouchard L."/>
            <person name="Reinert K."/>
            <person name="Remington K.A."/>
            <person name="Clark A.G."/>
            <person name="Waterman M.S."/>
            <person name="Eichler E.E."/>
            <person name="Adams M.D."/>
            <person name="Hunkapiller M.W."/>
            <person name="Myers E.W."/>
            <person name="Venter J.C."/>
        </authorList>
    </citation>
    <scope>NUCLEOTIDE SEQUENCE [LARGE SCALE GENOMIC DNA]</scope>
</reference>
<reference key="9">
    <citation type="journal article" date="2004" name="Genome Res.">
        <title>The status, quality, and expansion of the NIH full-length cDNA project: the Mammalian Gene Collection (MGC).</title>
        <authorList>
            <consortium name="The MGC Project Team"/>
        </authorList>
    </citation>
    <scope>NUCLEOTIDE SEQUENCE [LARGE SCALE MRNA]</scope>
    <source>
        <tissue>Brain</tissue>
    </source>
</reference>
<reference key="10">
    <citation type="journal article" date="2008" name="Proc. Natl. Acad. Sci. U.S.A.">
        <title>A quantitative atlas of mitotic phosphorylation.</title>
        <authorList>
            <person name="Dephoure N."/>
            <person name="Zhou C."/>
            <person name="Villen J."/>
            <person name="Beausoleil S.A."/>
            <person name="Bakalarski C.E."/>
            <person name="Elledge S.J."/>
            <person name="Gygi S.P."/>
        </authorList>
    </citation>
    <scope>IDENTIFICATION BY MASS SPECTROMETRY [LARGE SCALE ANALYSIS]</scope>
    <source>
        <tissue>Cervix carcinoma</tissue>
    </source>
</reference>
<reference key="11">
    <citation type="journal article" date="2011" name="BMC Syst. Biol.">
        <title>Initial characterization of the human central proteome.</title>
        <authorList>
            <person name="Burkard T.R."/>
            <person name="Planyavsky M."/>
            <person name="Kaupe I."/>
            <person name="Breitwieser F.P."/>
            <person name="Buerckstuemmer T."/>
            <person name="Bennett K.L."/>
            <person name="Superti-Furga G."/>
            <person name="Colinge J."/>
        </authorList>
    </citation>
    <scope>IDENTIFICATION BY MASS SPECTROMETRY [LARGE SCALE ANALYSIS]</scope>
</reference>
<reference key="12">
    <citation type="journal article" date="2012" name="Proc. Natl. Acad. Sci. U.S.A.">
        <title>N-terminal acetylome analyses and functional insights of the N-terminal acetyltransferase NatB.</title>
        <authorList>
            <person name="Van Damme P."/>
            <person name="Lasa M."/>
            <person name="Polevoda B."/>
            <person name="Gazquez C."/>
            <person name="Elosegui-Artola A."/>
            <person name="Kim D.S."/>
            <person name="De Juan-Pardo E."/>
            <person name="Demeyer K."/>
            <person name="Hole K."/>
            <person name="Larrea E."/>
            <person name="Timmerman E."/>
            <person name="Prieto J."/>
            <person name="Arnesen T."/>
            <person name="Sherman F."/>
            <person name="Gevaert K."/>
            <person name="Aldabe R."/>
        </authorList>
    </citation>
    <scope>ACETYLATION [LARGE SCALE ANALYSIS] AT SER-2</scope>
    <scope>CLEAVAGE OF INITIATOR METHIONINE [LARGE SCALE ANALYSIS]</scope>
    <scope>IDENTIFICATION BY MASS SPECTROMETRY [LARGE SCALE ANALYSIS]</scope>
</reference>
<reference key="13">
    <citation type="journal article" date="2013" name="Mol. Cell. Proteomics">
        <title>Large-scale top down proteomics of the human proteome: membrane proteins, mitochondria, and senescence.</title>
        <authorList>
            <person name="Catherman A.D."/>
            <person name="Durbin K.R."/>
            <person name="Ahlf D.R."/>
            <person name="Early B.P."/>
            <person name="Fellers R.T."/>
            <person name="Tran J.C."/>
            <person name="Thomas P.M."/>
            <person name="Kelleher N.L."/>
        </authorList>
    </citation>
    <scope>ISOPRENYLATION AT CYS-69</scope>
    <scope>METHYLATION AT CYS-69</scope>
    <scope>IDENTIFICATION BY MASS SPECTROMETRY</scope>
</reference>
<reference key="14">
    <citation type="journal article" date="2014" name="J. Proteomics">
        <title>An enzyme assisted RP-RPLC approach for in-depth analysis of human liver phosphoproteome.</title>
        <authorList>
            <person name="Bian Y."/>
            <person name="Song C."/>
            <person name="Cheng K."/>
            <person name="Dong M."/>
            <person name="Wang F."/>
            <person name="Huang J."/>
            <person name="Sun D."/>
            <person name="Wang L."/>
            <person name="Ye M."/>
            <person name="Zou H."/>
        </authorList>
    </citation>
    <scope>PHOSPHORYLATION [LARGE SCALE ANALYSIS] AT SER-49</scope>
    <scope>IDENTIFICATION BY MASS SPECTROMETRY [LARGE SCALE ANALYSIS]</scope>
    <source>
        <tissue>Liver</tissue>
    </source>
</reference>
<reference key="15">
    <citation type="journal article" date="2015" name="Proteomics">
        <title>N-terminome analysis of the human mitochondrial proteome.</title>
        <authorList>
            <person name="Vaca Jacome A.S."/>
            <person name="Rabilloud T."/>
            <person name="Schaeffer-Reiss C."/>
            <person name="Rompais M."/>
            <person name="Ayoub D."/>
            <person name="Lane L."/>
            <person name="Bairoch A."/>
            <person name="Van Dorsselaer A."/>
            <person name="Carapito C."/>
        </authorList>
    </citation>
    <scope>IDENTIFICATION BY MASS SPECTROMETRY [LARGE SCALE ANALYSIS]</scope>
</reference>
<protein>
    <recommendedName>
        <fullName>Guanine nucleotide-binding protein G(I)/G(S)/G(O) subunit gamma-12</fullName>
    </recommendedName>
</protein>
<dbReference type="EMBL" id="AF188181">
    <property type="protein sequence ID" value="AAF04571.1"/>
    <property type="molecule type" value="Genomic_DNA"/>
</dbReference>
<dbReference type="EMBL" id="AF123766">
    <property type="protein sequence ID" value="AAP97245.1"/>
    <property type="molecule type" value="mRNA"/>
</dbReference>
<dbReference type="EMBL" id="AF119663">
    <property type="protein sequence ID" value="AAF17220.1"/>
    <property type="molecule type" value="mRNA"/>
</dbReference>
<dbReference type="EMBL" id="AF365871">
    <property type="protein sequence ID" value="AAK53385.1"/>
    <property type="molecule type" value="mRNA"/>
</dbReference>
<dbReference type="EMBL" id="AF493879">
    <property type="protein sequence ID" value="AAM12593.1"/>
    <property type="molecule type" value="mRNA"/>
</dbReference>
<dbReference type="EMBL" id="AK293101">
    <property type="protein sequence ID" value="BAF85790.1"/>
    <property type="molecule type" value="mRNA"/>
</dbReference>
<dbReference type="EMBL" id="AL832431">
    <property type="protein sequence ID" value="CAH10645.1"/>
    <property type="molecule type" value="mRNA"/>
</dbReference>
<dbReference type="EMBL" id="CH471059">
    <property type="protein sequence ID" value="EAX06484.1"/>
    <property type="molecule type" value="Genomic_DNA"/>
</dbReference>
<dbReference type="EMBL" id="CH471059">
    <property type="protein sequence ID" value="EAX06485.1"/>
    <property type="molecule type" value="Genomic_DNA"/>
</dbReference>
<dbReference type="EMBL" id="CH471059">
    <property type="protein sequence ID" value="EAX06486.1"/>
    <property type="molecule type" value="Genomic_DNA"/>
</dbReference>
<dbReference type="EMBL" id="BC005940">
    <property type="protein sequence ID" value="AAH05940.1"/>
    <property type="molecule type" value="mRNA"/>
</dbReference>
<dbReference type="CCDS" id="CCDS30749.1"/>
<dbReference type="RefSeq" id="NP_061329.3">
    <property type="nucleotide sequence ID" value="NM_018841.5"/>
</dbReference>
<dbReference type="RefSeq" id="XP_016857298.1">
    <property type="nucleotide sequence ID" value="XM_017001809.3"/>
</dbReference>
<dbReference type="RefSeq" id="XP_016857299.1">
    <property type="nucleotide sequence ID" value="XM_017001810.1"/>
</dbReference>
<dbReference type="RefSeq" id="XP_016857300.1">
    <property type="nucleotide sequence ID" value="XM_017001811.1"/>
</dbReference>
<dbReference type="RefSeq" id="XP_047281362.1">
    <property type="nucleotide sequence ID" value="XM_047425406.1"/>
</dbReference>
<dbReference type="RefSeq" id="XP_047281371.1">
    <property type="nucleotide sequence ID" value="XM_047425415.1"/>
</dbReference>
<dbReference type="RefSeq" id="XP_054193683.1">
    <property type="nucleotide sequence ID" value="XM_054337708.1"/>
</dbReference>
<dbReference type="RefSeq" id="XP_054193684.1">
    <property type="nucleotide sequence ID" value="XM_054337709.1"/>
</dbReference>
<dbReference type="RefSeq" id="XP_054193685.1">
    <property type="nucleotide sequence ID" value="XM_054337710.1"/>
</dbReference>
<dbReference type="SMR" id="Q9UBI6"/>
<dbReference type="BioGRID" id="121016">
    <property type="interactions" value="116"/>
</dbReference>
<dbReference type="CORUM" id="Q9UBI6"/>
<dbReference type="FunCoup" id="Q9UBI6">
    <property type="interactions" value="2235"/>
</dbReference>
<dbReference type="IntAct" id="Q9UBI6">
    <property type="interactions" value="46"/>
</dbReference>
<dbReference type="MINT" id="Q9UBI6"/>
<dbReference type="STRING" id="9606.ENSP00000360021"/>
<dbReference type="GlyGen" id="Q9UBI6">
    <property type="glycosylation" value="1 site, 1 O-linked glycan (1 site)"/>
</dbReference>
<dbReference type="iPTMnet" id="Q9UBI6"/>
<dbReference type="PhosphoSitePlus" id="Q9UBI6"/>
<dbReference type="SwissPalm" id="Q9UBI6"/>
<dbReference type="BioMuta" id="GNG12"/>
<dbReference type="DMDM" id="12229817"/>
<dbReference type="jPOST" id="Q9UBI6"/>
<dbReference type="MassIVE" id="Q9UBI6"/>
<dbReference type="PaxDb" id="9606-ENSP00000360021"/>
<dbReference type="PeptideAtlas" id="Q9UBI6"/>
<dbReference type="ProteomicsDB" id="83975"/>
<dbReference type="Pumba" id="Q9UBI6"/>
<dbReference type="TopDownProteomics" id="Q9UBI6"/>
<dbReference type="Antibodypedia" id="33413">
    <property type="antibodies" value="60 antibodies from 22 providers"/>
</dbReference>
<dbReference type="DNASU" id="55970"/>
<dbReference type="Ensembl" id="ENST00000370982.4">
    <property type="protein sequence ID" value="ENSP00000360021.3"/>
    <property type="gene ID" value="ENSG00000172380.6"/>
</dbReference>
<dbReference type="GeneID" id="55970"/>
<dbReference type="KEGG" id="hsa:55970"/>
<dbReference type="MANE-Select" id="ENST00000370982.4">
    <property type="protein sequence ID" value="ENSP00000360021.3"/>
    <property type="RefSeq nucleotide sequence ID" value="NM_018841.6"/>
    <property type="RefSeq protein sequence ID" value="NP_061329.3"/>
</dbReference>
<dbReference type="UCSC" id="uc001dea.3">
    <property type="organism name" value="human"/>
</dbReference>
<dbReference type="AGR" id="HGNC:19663"/>
<dbReference type="CTD" id="55970"/>
<dbReference type="DisGeNET" id="55970"/>
<dbReference type="GeneCards" id="GNG12"/>
<dbReference type="HGNC" id="HGNC:19663">
    <property type="gene designation" value="GNG12"/>
</dbReference>
<dbReference type="HPA" id="ENSG00000172380">
    <property type="expression patterns" value="Low tissue specificity"/>
</dbReference>
<dbReference type="MIM" id="615405">
    <property type="type" value="gene"/>
</dbReference>
<dbReference type="neXtProt" id="NX_Q9UBI6"/>
<dbReference type="OpenTargets" id="ENSG00000172380"/>
<dbReference type="PharmGKB" id="PA134956700"/>
<dbReference type="VEuPathDB" id="HostDB:ENSG00000172380"/>
<dbReference type="eggNOG" id="KOG4119">
    <property type="taxonomic scope" value="Eukaryota"/>
</dbReference>
<dbReference type="GeneTree" id="ENSGT01100000263497"/>
<dbReference type="HOGENOM" id="CLU_168377_3_1_1"/>
<dbReference type="InParanoid" id="Q9UBI6"/>
<dbReference type="OMA" id="QEKKSCA"/>
<dbReference type="OrthoDB" id="6264244at2759"/>
<dbReference type="PAN-GO" id="Q9UBI6">
    <property type="GO annotations" value="3 GO annotations based on evolutionary models"/>
</dbReference>
<dbReference type="PhylomeDB" id="Q9UBI6"/>
<dbReference type="TreeFam" id="TF319909"/>
<dbReference type="PathwayCommons" id="Q9UBI6"/>
<dbReference type="Reactome" id="R-HSA-1296041">
    <property type="pathway name" value="Activation of G protein gated Potassium channels"/>
</dbReference>
<dbReference type="Reactome" id="R-HSA-163359">
    <property type="pathway name" value="Glucagon signaling in metabolic regulation"/>
</dbReference>
<dbReference type="Reactome" id="R-HSA-202040">
    <property type="pathway name" value="G-protein activation"/>
</dbReference>
<dbReference type="Reactome" id="R-HSA-381676">
    <property type="pathway name" value="Glucagon-like Peptide-1 (GLP1) regulates insulin secretion"/>
</dbReference>
<dbReference type="Reactome" id="R-HSA-392170">
    <property type="pathway name" value="ADP signalling through P2Y purinoceptor 12"/>
</dbReference>
<dbReference type="Reactome" id="R-HSA-392451">
    <property type="pathway name" value="G beta:gamma signalling through PI3Kgamma"/>
</dbReference>
<dbReference type="Reactome" id="R-HSA-392851">
    <property type="pathway name" value="Prostacyclin signalling through prostacyclin receptor"/>
</dbReference>
<dbReference type="Reactome" id="R-HSA-400042">
    <property type="pathway name" value="Adrenaline,noradrenaline inhibits insulin secretion"/>
</dbReference>
<dbReference type="Reactome" id="R-HSA-4086398">
    <property type="pathway name" value="Ca2+ pathway"/>
</dbReference>
<dbReference type="Reactome" id="R-HSA-416476">
    <property type="pathway name" value="G alpha (q) signalling events"/>
</dbReference>
<dbReference type="Reactome" id="R-HSA-416482">
    <property type="pathway name" value="G alpha (12/13) signalling events"/>
</dbReference>
<dbReference type="Reactome" id="R-HSA-418217">
    <property type="pathway name" value="G beta:gamma signalling through PLC beta"/>
</dbReference>
<dbReference type="Reactome" id="R-HSA-418555">
    <property type="pathway name" value="G alpha (s) signalling events"/>
</dbReference>
<dbReference type="Reactome" id="R-HSA-418592">
    <property type="pathway name" value="ADP signalling through P2Y purinoceptor 1"/>
</dbReference>
<dbReference type="Reactome" id="R-HSA-418594">
    <property type="pathway name" value="G alpha (i) signalling events"/>
</dbReference>
<dbReference type="Reactome" id="R-HSA-418597">
    <property type="pathway name" value="G alpha (z) signalling events"/>
</dbReference>
<dbReference type="Reactome" id="R-HSA-420092">
    <property type="pathway name" value="Glucagon-type ligand receptors"/>
</dbReference>
<dbReference type="Reactome" id="R-HSA-428930">
    <property type="pathway name" value="Thromboxane signalling through TP receptor"/>
</dbReference>
<dbReference type="Reactome" id="R-HSA-432040">
    <property type="pathway name" value="Vasopressin regulates renal water homeostasis via Aquaporins"/>
</dbReference>
<dbReference type="Reactome" id="R-HSA-456926">
    <property type="pathway name" value="Thrombin signalling through proteinase activated receptors (PARs)"/>
</dbReference>
<dbReference type="Reactome" id="R-HSA-500657">
    <property type="pathway name" value="Presynaptic function of Kainate receptors"/>
</dbReference>
<dbReference type="Reactome" id="R-HSA-6814122">
    <property type="pathway name" value="Cooperation of PDCL (PhLP1) and TRiC/CCT in G-protein beta folding"/>
</dbReference>
<dbReference type="Reactome" id="R-HSA-8964315">
    <property type="pathway name" value="G beta:gamma signalling through BTK"/>
</dbReference>
<dbReference type="Reactome" id="R-HSA-8964616">
    <property type="pathway name" value="G beta:gamma signalling through CDC42"/>
</dbReference>
<dbReference type="Reactome" id="R-HSA-9009391">
    <property type="pathway name" value="Extra-nuclear estrogen signaling"/>
</dbReference>
<dbReference type="Reactome" id="R-HSA-9634597">
    <property type="pathway name" value="GPER1 signaling"/>
</dbReference>
<dbReference type="Reactome" id="R-HSA-9660821">
    <property type="pathway name" value="ADORA2B mediated anti-inflammatory cytokines production"/>
</dbReference>
<dbReference type="Reactome" id="R-HSA-9856530">
    <property type="pathway name" value="High laminar flow shear stress activates signaling by PIEZO1 and PECAM1:CDH5:KDR in endothelial cells"/>
</dbReference>
<dbReference type="Reactome" id="R-HSA-997272">
    <property type="pathway name" value="Inhibition of voltage gated Ca2+ channels via Gbeta/gamma subunits"/>
</dbReference>
<dbReference type="SignaLink" id="Q9UBI6"/>
<dbReference type="SIGNOR" id="Q9UBI6"/>
<dbReference type="BioGRID-ORCS" id="55970">
    <property type="hits" value="15 hits in 1152 CRISPR screens"/>
</dbReference>
<dbReference type="ChiTaRS" id="GNG12">
    <property type="organism name" value="human"/>
</dbReference>
<dbReference type="GeneWiki" id="GNG12"/>
<dbReference type="GenomeRNAi" id="55970"/>
<dbReference type="Pharos" id="Q9UBI6">
    <property type="development level" value="Tbio"/>
</dbReference>
<dbReference type="PRO" id="PR:Q9UBI6"/>
<dbReference type="Proteomes" id="UP000005640">
    <property type="component" value="Chromosome 1"/>
</dbReference>
<dbReference type="RNAct" id="Q9UBI6">
    <property type="molecule type" value="protein"/>
</dbReference>
<dbReference type="Bgee" id="ENSG00000172380">
    <property type="expression patterns" value="Expressed in jejunal mucosa and 211 other cell types or tissues"/>
</dbReference>
<dbReference type="GO" id="GO:0070062">
    <property type="term" value="C:extracellular exosome"/>
    <property type="evidence" value="ECO:0007005"/>
    <property type="project" value="UniProtKB"/>
</dbReference>
<dbReference type="GO" id="GO:0005834">
    <property type="term" value="C:heterotrimeric G-protein complex"/>
    <property type="evidence" value="ECO:0000318"/>
    <property type="project" value="GO_Central"/>
</dbReference>
<dbReference type="GO" id="GO:0005886">
    <property type="term" value="C:plasma membrane"/>
    <property type="evidence" value="ECO:0000304"/>
    <property type="project" value="Reactome"/>
</dbReference>
<dbReference type="GO" id="GO:0045202">
    <property type="term" value="C:synapse"/>
    <property type="evidence" value="ECO:0007669"/>
    <property type="project" value="Ensembl"/>
</dbReference>
<dbReference type="GO" id="GO:0031681">
    <property type="term" value="F:G-protein beta-subunit binding"/>
    <property type="evidence" value="ECO:0000318"/>
    <property type="project" value="GO_Central"/>
</dbReference>
<dbReference type="GO" id="GO:0030165">
    <property type="term" value="F:PDZ domain binding"/>
    <property type="evidence" value="ECO:0000314"/>
    <property type="project" value="MGI"/>
</dbReference>
<dbReference type="GO" id="GO:0007186">
    <property type="term" value="P:G protein-coupled receptor signaling pathway"/>
    <property type="evidence" value="ECO:0000318"/>
    <property type="project" value="GO_Central"/>
</dbReference>
<dbReference type="GO" id="GO:0007165">
    <property type="term" value="P:signal transduction"/>
    <property type="evidence" value="ECO:0000304"/>
    <property type="project" value="ProtInc"/>
</dbReference>
<dbReference type="CDD" id="cd00068">
    <property type="entry name" value="GGL"/>
    <property type="match status" value="1"/>
</dbReference>
<dbReference type="FunFam" id="4.10.260.10:FF:000001">
    <property type="entry name" value="Guanine nucleotide-binding protein subunit gamma"/>
    <property type="match status" value="1"/>
</dbReference>
<dbReference type="Gene3D" id="4.10.260.10">
    <property type="entry name" value="Transducin (heterotrimeric G protein), gamma chain"/>
    <property type="match status" value="1"/>
</dbReference>
<dbReference type="InterPro" id="IPR015898">
    <property type="entry name" value="G-protein_gamma-like_dom"/>
</dbReference>
<dbReference type="InterPro" id="IPR036284">
    <property type="entry name" value="GGL_sf"/>
</dbReference>
<dbReference type="InterPro" id="IPR001770">
    <property type="entry name" value="Gprotein-gamma"/>
</dbReference>
<dbReference type="PANTHER" id="PTHR13809">
    <property type="entry name" value="GUANINE NUCLEOTIDE-BINDING PROTEIN GAMMA SUBUNIT"/>
    <property type="match status" value="1"/>
</dbReference>
<dbReference type="Pfam" id="PF00631">
    <property type="entry name" value="G-gamma"/>
    <property type="match status" value="1"/>
</dbReference>
<dbReference type="PRINTS" id="PR00321">
    <property type="entry name" value="GPROTEING"/>
</dbReference>
<dbReference type="SMART" id="SM01224">
    <property type="entry name" value="G_gamma"/>
    <property type="match status" value="1"/>
</dbReference>
<dbReference type="SMART" id="SM00224">
    <property type="entry name" value="GGL"/>
    <property type="match status" value="1"/>
</dbReference>
<dbReference type="SUPFAM" id="SSF48670">
    <property type="entry name" value="Transducin (heterotrimeric G protein), gamma chain"/>
    <property type="match status" value="1"/>
</dbReference>
<dbReference type="PROSITE" id="PS50058">
    <property type="entry name" value="G_PROTEIN_GAMMA"/>
    <property type="match status" value="1"/>
</dbReference>
<proteinExistence type="evidence at protein level"/>
<feature type="initiator methionine" description="Removed" evidence="5">
    <location>
        <position position="1"/>
    </location>
</feature>
<feature type="chain" id="PRO_0000012667" description="Guanine nucleotide-binding protein G(I)/G(S)/G(O) subunit gamma-12">
    <location>
        <begin position="2"/>
        <end position="69"/>
    </location>
</feature>
<feature type="propeptide" id="PRO_0000012668" description="Removed in mature form" evidence="1">
    <location>
        <begin position="70"/>
        <end position="72"/>
    </location>
</feature>
<feature type="modified residue" description="N-acetylserine" evidence="5">
    <location>
        <position position="2"/>
    </location>
</feature>
<feature type="modified residue" description="Phosphoserine" evidence="2">
    <location>
        <position position="26"/>
    </location>
</feature>
<feature type="modified residue" description="Phosphotyrosine" evidence="2">
    <location>
        <position position="42"/>
    </location>
</feature>
<feature type="modified residue" description="Phosphoserine" evidence="6">
    <location>
        <position position="49"/>
    </location>
</feature>
<feature type="modified residue" description="Cysteine methyl ester" evidence="3">
    <location>
        <position position="69"/>
    </location>
</feature>
<feature type="lipid moiety-binding region" description="S-geranylgeranyl cysteine" evidence="3">
    <location>
        <position position="69"/>
    </location>
</feature>
<feature type="sequence conflict" description="In Ref. 9; AAH05940." evidence="4" ref="9">
    <original>R</original>
    <variation>G</variation>
    <location>
        <position position="29"/>
    </location>
</feature>
<name>GBG12_HUMAN</name>
<comment type="function">
    <text>Guanine nucleotide-binding proteins (G proteins) are involved as a modulator or transducer in various transmembrane signaling systems. The beta and gamma chains are required for the GTPase activity, for replacement of GDP by GTP, and for G protein-effector interaction.</text>
</comment>
<comment type="subunit">
    <text>G proteins are composed of 3 units, alpha, beta and gamma.</text>
</comment>
<comment type="interaction">
    <interactant intactId="EBI-358636">
        <id>Q9UBI6</id>
    </interactant>
    <interactant intactId="EBI-701903">
        <id>Q14192</id>
        <label>FHL2</label>
    </interactant>
    <organismsDiffer>false</organismsDiffer>
    <experiments>11</experiments>
</comment>
<comment type="interaction">
    <interactant intactId="EBI-358636">
        <id>Q9UBI6</id>
    </interactant>
    <interactant intactId="EBI-12094670">
        <id>Q8WUI4-6</id>
        <label>HDAC7</label>
    </interactant>
    <organismsDiffer>false</organismsDiffer>
    <experiments>3</experiments>
</comment>
<comment type="subcellular location">
    <subcellularLocation>
        <location evidence="4">Cell membrane</location>
        <topology evidence="4">Lipid-anchor</topology>
        <orientation evidence="4">Cytoplasmic side</orientation>
    </subcellularLocation>
</comment>
<comment type="similarity">
    <text evidence="4">Belongs to the G protein gamma family.</text>
</comment>